<dbReference type="EMBL" id="U00096">
    <property type="status" value="NOT_ANNOTATED_CDS"/>
    <property type="molecule type" value="Genomic_DNA"/>
</dbReference>
<dbReference type="EMBL" id="AP009048">
    <property type="protein sequence ID" value="BAA15283.2"/>
    <property type="molecule type" value="Genomic_DNA"/>
</dbReference>
<dbReference type="SMR" id="P0CF60"/>
<dbReference type="FunCoup" id="P0CF60">
    <property type="interactions" value="6"/>
</dbReference>
<dbReference type="KEGG" id="ecj:JW1570"/>
<dbReference type="eggNOG" id="COG2801">
    <property type="taxonomic scope" value="Bacteria"/>
</dbReference>
<dbReference type="HOGENOM" id="CLU_052819_0_0_6"/>
<dbReference type="InParanoid" id="P0CF60"/>
<dbReference type="PhylomeDB" id="P0CF60"/>
<dbReference type="Proteomes" id="UP000000625">
    <property type="component" value="Chromosome"/>
</dbReference>
<dbReference type="GO" id="GO:0003677">
    <property type="term" value="F:DNA binding"/>
    <property type="evidence" value="ECO:0007669"/>
    <property type="project" value="UniProtKB-KW"/>
</dbReference>
<dbReference type="GO" id="GO:0015074">
    <property type="term" value="P:DNA integration"/>
    <property type="evidence" value="ECO:0007669"/>
    <property type="project" value="InterPro"/>
</dbReference>
<dbReference type="GO" id="GO:0006310">
    <property type="term" value="P:DNA recombination"/>
    <property type="evidence" value="ECO:0007669"/>
    <property type="project" value="UniProtKB-KW"/>
</dbReference>
<dbReference type="GO" id="GO:0032196">
    <property type="term" value="P:transposition"/>
    <property type="evidence" value="ECO:0007669"/>
    <property type="project" value="UniProtKB-KW"/>
</dbReference>
<dbReference type="Gene3D" id="3.30.420.10">
    <property type="entry name" value="Ribonuclease H-like superfamily/Ribonuclease H"/>
    <property type="match status" value="1"/>
</dbReference>
<dbReference type="InterPro" id="IPR001584">
    <property type="entry name" value="Integrase_cat-core"/>
</dbReference>
<dbReference type="InterPro" id="IPR012337">
    <property type="entry name" value="RNaseH-like_sf"/>
</dbReference>
<dbReference type="InterPro" id="IPR036397">
    <property type="entry name" value="RNaseH_sf"/>
</dbReference>
<dbReference type="InterPro" id="IPR048020">
    <property type="entry name" value="Transpos_IS3"/>
</dbReference>
<dbReference type="NCBIfam" id="NF033516">
    <property type="entry name" value="transpos_IS3"/>
    <property type="match status" value="1"/>
</dbReference>
<dbReference type="PANTHER" id="PTHR37936">
    <property type="entry name" value="TRANSPOSASE INSC FOR INSERTION ELEMENT IS2A-RELATED"/>
    <property type="match status" value="1"/>
</dbReference>
<dbReference type="PANTHER" id="PTHR37936:SF3">
    <property type="entry name" value="TRANSPOSASE INSC FOR INSERTION ELEMENT IS2A-RELATED"/>
    <property type="match status" value="1"/>
</dbReference>
<dbReference type="Pfam" id="PF00665">
    <property type="entry name" value="rve"/>
    <property type="match status" value="1"/>
</dbReference>
<dbReference type="SUPFAM" id="SSF53098">
    <property type="entry name" value="Ribonuclease H-like"/>
    <property type="match status" value="1"/>
</dbReference>
<dbReference type="PROSITE" id="PS50994">
    <property type="entry name" value="INTEGRASE"/>
    <property type="match status" value="1"/>
</dbReference>
<reference key="1">
    <citation type="journal article" date="1997" name="Science">
        <title>The complete genome sequence of Escherichia coli K-12.</title>
        <authorList>
            <person name="Blattner F.R."/>
            <person name="Plunkett G. III"/>
            <person name="Bloch C.A."/>
            <person name="Perna N.T."/>
            <person name="Burland V."/>
            <person name="Riley M."/>
            <person name="Collado-Vides J."/>
            <person name="Glasner J.D."/>
            <person name="Rode C.K."/>
            <person name="Mayhew G.F."/>
            <person name="Gregor J."/>
            <person name="Davis N.W."/>
            <person name="Kirkpatrick H.A."/>
            <person name="Goeden M.A."/>
            <person name="Rose D.J."/>
            <person name="Mau B."/>
            <person name="Shao Y."/>
        </authorList>
    </citation>
    <scope>NUCLEOTIDE SEQUENCE [LARGE SCALE GENOMIC DNA]</scope>
    <source>
        <strain>K12 / MG1655 / ATCC 47076</strain>
    </source>
</reference>
<reference key="2">
    <citation type="journal article" date="2006" name="Mol. Syst. Biol.">
        <title>Highly accurate genome sequences of Escherichia coli K-12 strains MG1655 and W3110.</title>
        <authorList>
            <person name="Hayashi K."/>
            <person name="Morooka N."/>
            <person name="Yamamoto Y."/>
            <person name="Fujita K."/>
            <person name="Isono K."/>
            <person name="Choi S."/>
            <person name="Ohtsubo E."/>
            <person name="Baba T."/>
            <person name="Wanner B.L."/>
            <person name="Mori H."/>
            <person name="Horiuchi T."/>
        </authorList>
    </citation>
    <scope>NUCLEOTIDE SEQUENCE [LARGE SCALE GENOMIC DNA]</scope>
    <source>
        <strain>K12 / W3110 / ATCC 27325 / DSM 5911</strain>
    </source>
</reference>
<protein>
    <recommendedName>
        <fullName>Putative transposase InsD for insertion element IS2E</fullName>
    </recommendedName>
</protein>
<evidence type="ECO:0000255" key="1">
    <source>
        <dbReference type="PROSITE-ProRule" id="PRU00457"/>
    </source>
</evidence>
<evidence type="ECO:0000305" key="2"/>
<comment type="function">
    <text>Involved in the transposition of the insertion sequence IS2.</text>
</comment>
<comment type="caution">
    <text evidence="2">Could be the product of a pseudogene. IS2E is a partial IS2 sequence which lacks the N-terminal 83 residues of InsD. Locus b1578 is not annotated in the MG1655 genome and b1578/JW1570 is probably not expressed.</text>
</comment>
<proteinExistence type="uncertain"/>
<name>INSD8_ECOLI</name>
<keyword id="KW-0233">DNA recombination</keyword>
<keyword id="KW-0238">DNA-binding</keyword>
<keyword id="KW-1185">Reference proteome</keyword>
<keyword id="KW-0814">Transposable element</keyword>
<keyword id="KW-0815">Transposition</keyword>
<gene>
    <name type="primary">insD8</name>
    <name type="ordered locus">b1578</name>
    <name type="ordered locus">JW1570</name>
</gene>
<sequence>MPAINAKRVYRIMRQNALLLERKPAVPPSKRAHTGRVAVKESNQRWCSDGFEFCCDNGERLRVTFALDCCDREALHWAVTTGGFNSETVQDVMLGAVERRFGNDLPSSPVEWLTDNGSCYRANETRQFARMLGLEPKNTAVRSPESNGIAESFVKTIKRDYISIMPKPDGLTAAKNLAEAFEHYNEWHPHSALGYRSPREYLRQRACNGLSDNRCLEI</sequence>
<feature type="chain" id="PRO_0000393579" description="Putative transposase InsD for insertion element IS2E">
    <location>
        <begin position="1"/>
        <end position="218"/>
    </location>
</feature>
<feature type="domain" description="Integrase catalytic" evidence="1">
    <location>
        <begin position="23"/>
        <end position="206"/>
    </location>
</feature>
<accession>P0CF60</accession>
<accession>P0C5W4</accession>
<accession>P19777</accession>
<accession>P76167</accession>
<accession>P76916</accession>
<accession>P77033</accession>
<accession>Q79EJ0</accession>
<organism>
    <name type="scientific">Escherichia coli (strain K12)</name>
    <dbReference type="NCBI Taxonomy" id="83333"/>
    <lineage>
        <taxon>Bacteria</taxon>
        <taxon>Pseudomonadati</taxon>
        <taxon>Pseudomonadota</taxon>
        <taxon>Gammaproteobacteria</taxon>
        <taxon>Enterobacterales</taxon>
        <taxon>Enterobacteriaceae</taxon>
        <taxon>Escherichia</taxon>
    </lineage>
</organism>